<reference key="1">
    <citation type="journal article" date="2003" name="Nucleic Acids Res.">
        <title>The complete genome sequence and analysis of Corynebacterium diphtheriae NCTC13129.</title>
        <authorList>
            <person name="Cerdeno-Tarraga A.-M."/>
            <person name="Efstratiou A."/>
            <person name="Dover L.G."/>
            <person name="Holden M.T.G."/>
            <person name="Pallen M.J."/>
            <person name="Bentley S.D."/>
            <person name="Besra G.S."/>
            <person name="Churcher C.M."/>
            <person name="James K.D."/>
            <person name="De Zoysa A."/>
            <person name="Chillingworth T."/>
            <person name="Cronin A."/>
            <person name="Dowd L."/>
            <person name="Feltwell T."/>
            <person name="Hamlin N."/>
            <person name="Holroyd S."/>
            <person name="Jagels K."/>
            <person name="Moule S."/>
            <person name="Quail M.A."/>
            <person name="Rabbinowitsch E."/>
            <person name="Rutherford K.M."/>
            <person name="Thomson N.R."/>
            <person name="Unwin L."/>
            <person name="Whitehead S."/>
            <person name="Barrell B.G."/>
            <person name="Parkhill J."/>
        </authorList>
    </citation>
    <scope>NUCLEOTIDE SEQUENCE [LARGE SCALE GENOMIC DNA]</scope>
    <source>
        <strain>ATCC 700971 / NCTC 13129 / Biotype gravis</strain>
    </source>
</reference>
<sequence length="222" mass="23291">MAIVVVTGTNTDVGKTIASAAVCQHYSRQGFRVVPVKPVQTGEPKGSGDAQTIEKLTGIVGKCFARFPEPLAPNLSAQRAGMQQLNLEEIVNKIRELDGPQTVVVVEGAGGLLVRLADSFTIADVAAQLDAPLIVVTNMALGSLNAAELTVEAAQRRGLKVLGLIGGSMPKNPDLATSLNVAEMEKVTGIPLWGSIAEGAGQLSKEAFCQLVEDLHLPTMWP</sequence>
<name>BIOD_CORDI</name>
<accession>Q6NHE6</accession>
<gene>
    <name evidence="1" type="primary">bioD</name>
    <name type="ordered locus">DIP1192</name>
</gene>
<protein>
    <recommendedName>
        <fullName evidence="1">ATP-dependent dethiobiotin synthetase BioD</fullName>
        <ecNumber evidence="1">6.3.3.3</ecNumber>
    </recommendedName>
    <alternativeName>
        <fullName evidence="1">DTB synthetase</fullName>
        <shortName evidence="1">DTBS</shortName>
    </alternativeName>
    <alternativeName>
        <fullName evidence="1">Dethiobiotin synthase</fullName>
    </alternativeName>
</protein>
<keyword id="KW-0067">ATP-binding</keyword>
<keyword id="KW-0093">Biotin biosynthesis</keyword>
<keyword id="KW-0963">Cytoplasm</keyword>
<keyword id="KW-0436">Ligase</keyword>
<keyword id="KW-0460">Magnesium</keyword>
<keyword id="KW-0479">Metal-binding</keyword>
<keyword id="KW-0547">Nucleotide-binding</keyword>
<keyword id="KW-1185">Reference proteome</keyword>
<proteinExistence type="inferred from homology"/>
<dbReference type="EC" id="6.3.3.3" evidence="1"/>
<dbReference type="EMBL" id="BX248357">
    <property type="protein sequence ID" value="CAE49719.1"/>
    <property type="molecule type" value="Genomic_DNA"/>
</dbReference>
<dbReference type="RefSeq" id="WP_010934877.1">
    <property type="nucleotide sequence ID" value="NC_002935.2"/>
</dbReference>
<dbReference type="SMR" id="Q6NHE6"/>
<dbReference type="STRING" id="257309.DIP1192"/>
<dbReference type="GeneID" id="29421661"/>
<dbReference type="KEGG" id="cdi:DIP1192"/>
<dbReference type="HOGENOM" id="CLU_072551_1_1_11"/>
<dbReference type="UniPathway" id="UPA00078">
    <property type="reaction ID" value="UER00161"/>
</dbReference>
<dbReference type="Proteomes" id="UP000002198">
    <property type="component" value="Chromosome"/>
</dbReference>
<dbReference type="GO" id="GO:0005829">
    <property type="term" value="C:cytosol"/>
    <property type="evidence" value="ECO:0007669"/>
    <property type="project" value="TreeGrafter"/>
</dbReference>
<dbReference type="GO" id="GO:0005524">
    <property type="term" value="F:ATP binding"/>
    <property type="evidence" value="ECO:0007669"/>
    <property type="project" value="UniProtKB-UniRule"/>
</dbReference>
<dbReference type="GO" id="GO:0004141">
    <property type="term" value="F:dethiobiotin synthase activity"/>
    <property type="evidence" value="ECO:0007669"/>
    <property type="project" value="UniProtKB-UniRule"/>
</dbReference>
<dbReference type="GO" id="GO:0000287">
    <property type="term" value="F:magnesium ion binding"/>
    <property type="evidence" value="ECO:0007669"/>
    <property type="project" value="UniProtKB-UniRule"/>
</dbReference>
<dbReference type="GO" id="GO:0009102">
    <property type="term" value="P:biotin biosynthetic process"/>
    <property type="evidence" value="ECO:0007669"/>
    <property type="project" value="UniProtKB-UniRule"/>
</dbReference>
<dbReference type="CDD" id="cd03109">
    <property type="entry name" value="DTBS"/>
    <property type="match status" value="1"/>
</dbReference>
<dbReference type="Gene3D" id="3.40.50.300">
    <property type="entry name" value="P-loop containing nucleotide triphosphate hydrolases"/>
    <property type="match status" value="1"/>
</dbReference>
<dbReference type="HAMAP" id="MF_00336">
    <property type="entry name" value="BioD"/>
    <property type="match status" value="1"/>
</dbReference>
<dbReference type="InterPro" id="IPR004472">
    <property type="entry name" value="DTB_synth_BioD"/>
</dbReference>
<dbReference type="InterPro" id="IPR027417">
    <property type="entry name" value="P-loop_NTPase"/>
</dbReference>
<dbReference type="NCBIfam" id="TIGR00347">
    <property type="entry name" value="bioD"/>
    <property type="match status" value="1"/>
</dbReference>
<dbReference type="PANTHER" id="PTHR43210">
    <property type="entry name" value="DETHIOBIOTIN SYNTHETASE"/>
    <property type="match status" value="1"/>
</dbReference>
<dbReference type="PANTHER" id="PTHR43210:SF5">
    <property type="entry name" value="DETHIOBIOTIN SYNTHETASE"/>
    <property type="match status" value="1"/>
</dbReference>
<dbReference type="Pfam" id="PF13500">
    <property type="entry name" value="AAA_26"/>
    <property type="match status" value="1"/>
</dbReference>
<dbReference type="PIRSF" id="PIRSF006755">
    <property type="entry name" value="DTB_synth"/>
    <property type="match status" value="1"/>
</dbReference>
<dbReference type="SUPFAM" id="SSF52540">
    <property type="entry name" value="P-loop containing nucleoside triphosphate hydrolases"/>
    <property type="match status" value="1"/>
</dbReference>
<evidence type="ECO:0000255" key="1">
    <source>
        <dbReference type="HAMAP-Rule" id="MF_00336"/>
    </source>
</evidence>
<feature type="chain" id="PRO_0000302501" description="ATP-dependent dethiobiotin synthetase BioD">
    <location>
        <begin position="1"/>
        <end position="222"/>
    </location>
</feature>
<feature type="active site" evidence="1">
    <location>
        <position position="37"/>
    </location>
</feature>
<feature type="binding site" evidence="1">
    <location>
        <begin position="12"/>
        <end position="17"/>
    </location>
    <ligand>
        <name>ATP</name>
        <dbReference type="ChEBI" id="CHEBI:30616"/>
    </ligand>
</feature>
<feature type="binding site" evidence="1">
    <location>
        <position position="16"/>
    </location>
    <ligand>
        <name>Mg(2+)</name>
        <dbReference type="ChEBI" id="CHEBI:18420"/>
    </ligand>
</feature>
<feature type="binding site" evidence="1">
    <location>
        <position position="41"/>
    </location>
    <ligand>
        <name>substrate</name>
    </ligand>
</feature>
<feature type="binding site" evidence="1">
    <location>
        <position position="49"/>
    </location>
    <ligand>
        <name>ATP</name>
        <dbReference type="ChEBI" id="CHEBI:30616"/>
    </ligand>
</feature>
<feature type="binding site" evidence="1">
    <location>
        <position position="49"/>
    </location>
    <ligand>
        <name>Mg(2+)</name>
        <dbReference type="ChEBI" id="CHEBI:18420"/>
    </ligand>
</feature>
<feature type="binding site" evidence="1">
    <location>
        <begin position="107"/>
        <end position="110"/>
    </location>
    <ligand>
        <name>ATP</name>
        <dbReference type="ChEBI" id="CHEBI:30616"/>
    </ligand>
</feature>
<feature type="binding site" evidence="1">
    <location>
        <position position="107"/>
    </location>
    <ligand>
        <name>Mg(2+)</name>
        <dbReference type="ChEBI" id="CHEBI:18420"/>
    </ligand>
</feature>
<feature type="binding site" evidence="1">
    <location>
        <begin position="167"/>
        <end position="168"/>
    </location>
    <ligand>
        <name>ATP</name>
        <dbReference type="ChEBI" id="CHEBI:30616"/>
    </ligand>
</feature>
<feature type="binding site" evidence="1">
    <location>
        <begin position="197"/>
        <end position="199"/>
    </location>
    <ligand>
        <name>ATP</name>
        <dbReference type="ChEBI" id="CHEBI:30616"/>
    </ligand>
</feature>
<comment type="function">
    <text evidence="1">Catalyzes a mechanistically unusual reaction, the ATP-dependent insertion of CO2 between the N7 and N8 nitrogen atoms of 7,8-diaminopelargonic acid (DAPA, also called 7,8-diammoniononanoate) to form a ureido ring.</text>
</comment>
<comment type="catalytic activity">
    <reaction evidence="1">
        <text>(7R,8S)-7,8-diammoniononanoate + CO2 + ATP = (4R,5S)-dethiobiotin + ADP + phosphate + 3 H(+)</text>
        <dbReference type="Rhea" id="RHEA:15805"/>
        <dbReference type="ChEBI" id="CHEBI:15378"/>
        <dbReference type="ChEBI" id="CHEBI:16526"/>
        <dbReference type="ChEBI" id="CHEBI:30616"/>
        <dbReference type="ChEBI" id="CHEBI:43474"/>
        <dbReference type="ChEBI" id="CHEBI:149469"/>
        <dbReference type="ChEBI" id="CHEBI:149473"/>
        <dbReference type="ChEBI" id="CHEBI:456216"/>
        <dbReference type="EC" id="6.3.3.3"/>
    </reaction>
</comment>
<comment type="cofactor">
    <cofactor evidence="1">
        <name>Mg(2+)</name>
        <dbReference type="ChEBI" id="CHEBI:18420"/>
    </cofactor>
</comment>
<comment type="pathway">
    <text evidence="1">Cofactor biosynthesis; biotin biosynthesis; biotin from 7,8-diaminononanoate: step 1/2.</text>
</comment>
<comment type="subunit">
    <text evidence="1">Homodimer.</text>
</comment>
<comment type="subcellular location">
    <subcellularLocation>
        <location evidence="1">Cytoplasm</location>
    </subcellularLocation>
</comment>
<comment type="similarity">
    <text evidence="1">Belongs to the dethiobiotin synthetase family.</text>
</comment>
<organism>
    <name type="scientific">Corynebacterium diphtheriae (strain ATCC 700971 / NCTC 13129 / Biotype gravis)</name>
    <dbReference type="NCBI Taxonomy" id="257309"/>
    <lineage>
        <taxon>Bacteria</taxon>
        <taxon>Bacillati</taxon>
        <taxon>Actinomycetota</taxon>
        <taxon>Actinomycetes</taxon>
        <taxon>Mycobacteriales</taxon>
        <taxon>Corynebacteriaceae</taxon>
        <taxon>Corynebacterium</taxon>
    </lineage>
</organism>